<keyword id="KW-0028">Amino-acid biosynthesis</keyword>
<keyword id="KW-0055">Arginine biosynthesis</keyword>
<keyword id="KW-0067">ATP-binding</keyword>
<keyword id="KW-0436">Ligase</keyword>
<keyword id="KW-0464">Manganese</keyword>
<keyword id="KW-0479">Metal-binding</keyword>
<keyword id="KW-0496">Mitochondrion</keyword>
<keyword id="KW-0547">Nucleotide-binding</keyword>
<keyword id="KW-0677">Repeat</keyword>
<keyword id="KW-0809">Transit peptide</keyword>
<reference key="1">
    <citation type="journal article" date="1994" name="J. Bacteriol.">
        <title>Molecular analysis of the Trichosporon cutaneum DSM 70698 argA gene and its use for DNA-mediated transformations.</title>
        <authorList>
            <person name="Reiser J."/>
            <person name="Glumoff V."/>
            <person name="Ochsner U.A."/>
            <person name="Fiechter A."/>
        </authorList>
    </citation>
    <scope>NUCLEOTIDE SEQUENCE [GENOMIC DNA]</scope>
    <source>
        <strain>DSM 70698</strain>
    </source>
</reference>
<feature type="transit peptide" description="Mitochondrion" evidence="3">
    <location>
        <begin position="1"/>
        <end position="11"/>
    </location>
</feature>
<feature type="chain" id="PRO_0000145090" description="Carbamoyl phosphate synthase arginine-specific large chain" evidence="3">
    <location>
        <begin position="12"/>
        <end position="1176"/>
    </location>
</feature>
<feature type="domain" description="ATP-grasp 1" evidence="4">
    <location>
        <begin position="201"/>
        <end position="391"/>
    </location>
</feature>
<feature type="domain" description="ATP-grasp 2" evidence="4">
    <location>
        <begin position="734"/>
        <end position="931"/>
    </location>
</feature>
<feature type="domain" description="MGS-like" evidence="5">
    <location>
        <begin position="999"/>
        <end position="1154"/>
    </location>
</feature>
<feature type="region of interest" description="Carboxyphosphate synthetic domain" evidence="1">
    <location>
        <begin position="70"/>
        <end position="465"/>
    </location>
</feature>
<feature type="region of interest" description="Oligomerization domain" evidence="1">
    <location>
        <begin position="466"/>
        <end position="610"/>
    </location>
</feature>
<feature type="region of interest" description="Carbamoyl phosphate synthetic domain" evidence="1">
    <location>
        <begin position="611"/>
        <end position="997"/>
    </location>
</feature>
<feature type="region of interest" description="Allosteric domain" evidence="1">
    <location>
        <begin position="998"/>
        <end position="1137"/>
    </location>
</feature>
<feature type="binding site" evidence="1">
    <location>
        <position position="197"/>
    </location>
    <ligand>
        <name>ATP</name>
        <dbReference type="ChEBI" id="CHEBI:30616"/>
        <label>1</label>
    </ligand>
</feature>
<feature type="binding site" evidence="1">
    <location>
        <position position="237"/>
    </location>
    <ligand>
        <name>ATP</name>
        <dbReference type="ChEBI" id="CHEBI:30616"/>
        <label>1</label>
    </ligand>
</feature>
<feature type="binding site" evidence="1">
    <location>
        <position position="243"/>
    </location>
    <ligand>
        <name>ATP</name>
        <dbReference type="ChEBI" id="CHEBI:30616"/>
        <label>1</label>
    </ligand>
</feature>
<feature type="binding site" evidence="1">
    <location>
        <position position="244"/>
    </location>
    <ligand>
        <name>ATP</name>
        <dbReference type="ChEBI" id="CHEBI:30616"/>
        <label>1</label>
    </ligand>
</feature>
<feature type="binding site" evidence="1">
    <location>
        <position position="273"/>
    </location>
    <ligand>
        <name>ATP</name>
        <dbReference type="ChEBI" id="CHEBI:30616"/>
        <label>1</label>
    </ligand>
</feature>
<feature type="binding site" evidence="1">
    <location>
        <position position="275"/>
    </location>
    <ligand>
        <name>ATP</name>
        <dbReference type="ChEBI" id="CHEBI:30616"/>
        <label>1</label>
    </ligand>
</feature>
<feature type="binding site" evidence="1">
    <location>
        <position position="280"/>
    </location>
    <ligand>
        <name>ATP</name>
        <dbReference type="ChEBI" id="CHEBI:30616"/>
        <label>1</label>
    </ligand>
</feature>
<feature type="binding site" evidence="1">
    <location>
        <position position="306"/>
    </location>
    <ligand>
        <name>ATP</name>
        <dbReference type="ChEBI" id="CHEBI:30616"/>
        <label>1</label>
    </ligand>
</feature>
<feature type="binding site" evidence="1">
    <location>
        <position position="307"/>
    </location>
    <ligand>
        <name>ATP</name>
        <dbReference type="ChEBI" id="CHEBI:30616"/>
        <label>1</label>
    </ligand>
</feature>
<feature type="binding site" evidence="1">
    <location>
        <position position="308"/>
    </location>
    <ligand>
        <name>ATP</name>
        <dbReference type="ChEBI" id="CHEBI:30616"/>
        <label>1</label>
    </ligand>
</feature>
<feature type="binding site" evidence="1">
    <location>
        <position position="348"/>
    </location>
    <ligand>
        <name>ATP</name>
        <dbReference type="ChEBI" id="CHEBI:30616"/>
        <label>1</label>
    </ligand>
</feature>
<feature type="binding site" evidence="4">
    <location>
        <position position="348"/>
    </location>
    <ligand>
        <name>Mg(2+)</name>
        <dbReference type="ChEBI" id="CHEBI:18420"/>
        <label>1</label>
    </ligand>
</feature>
<feature type="binding site" evidence="4">
    <location>
        <position position="348"/>
    </location>
    <ligand>
        <name>Mn(2+)</name>
        <dbReference type="ChEBI" id="CHEBI:29035"/>
        <label>1</label>
    </ligand>
</feature>
<feature type="binding site" evidence="1">
    <location>
        <position position="362"/>
    </location>
    <ligand>
        <name>ATP</name>
        <dbReference type="ChEBI" id="CHEBI:30616"/>
        <label>1</label>
    </ligand>
</feature>
<feature type="binding site" evidence="4">
    <location>
        <position position="362"/>
    </location>
    <ligand>
        <name>Mg(2+)</name>
        <dbReference type="ChEBI" id="CHEBI:18420"/>
        <label>1</label>
    </ligand>
</feature>
<feature type="binding site" evidence="4">
    <location>
        <position position="362"/>
    </location>
    <ligand>
        <name>Mg(2+)</name>
        <dbReference type="ChEBI" id="CHEBI:18420"/>
        <label>2</label>
    </ligand>
</feature>
<feature type="binding site" evidence="4">
    <location>
        <position position="362"/>
    </location>
    <ligand>
        <name>Mn(2+)</name>
        <dbReference type="ChEBI" id="CHEBI:29035"/>
        <label>1</label>
    </ligand>
</feature>
<feature type="binding site" evidence="4">
    <location>
        <position position="362"/>
    </location>
    <ligand>
        <name>Mn(2+)</name>
        <dbReference type="ChEBI" id="CHEBI:29035"/>
        <label>2</label>
    </ligand>
</feature>
<feature type="binding site" evidence="4">
    <location>
        <position position="364"/>
    </location>
    <ligand>
        <name>Mg(2+)</name>
        <dbReference type="ChEBI" id="CHEBI:18420"/>
        <label>2</label>
    </ligand>
</feature>
<feature type="binding site" evidence="4">
    <location>
        <position position="364"/>
    </location>
    <ligand>
        <name>Mn(2+)</name>
        <dbReference type="ChEBI" id="CHEBI:29035"/>
        <label>2</label>
    </ligand>
</feature>
<feature type="binding site" evidence="1">
    <location>
        <position position="770"/>
    </location>
    <ligand>
        <name>ATP</name>
        <dbReference type="ChEBI" id="CHEBI:30616"/>
        <label>2</label>
    </ligand>
</feature>
<feature type="binding site" evidence="1">
    <location>
        <position position="809"/>
    </location>
    <ligand>
        <name>ATP</name>
        <dbReference type="ChEBI" id="CHEBI:30616"/>
        <label>2</label>
    </ligand>
</feature>
<feature type="binding site" evidence="1">
    <location>
        <position position="811"/>
    </location>
    <ligand>
        <name>ATP</name>
        <dbReference type="ChEBI" id="CHEBI:30616"/>
        <label>2</label>
    </ligand>
</feature>
<feature type="binding site" evidence="1">
    <location>
        <position position="816"/>
    </location>
    <ligand>
        <name>ATP</name>
        <dbReference type="ChEBI" id="CHEBI:30616"/>
        <label>2</label>
    </ligand>
</feature>
<feature type="binding site" evidence="1">
    <location>
        <position position="841"/>
    </location>
    <ligand>
        <name>ATP</name>
        <dbReference type="ChEBI" id="CHEBI:30616"/>
        <label>2</label>
    </ligand>
</feature>
<feature type="binding site" evidence="1">
    <location>
        <position position="842"/>
    </location>
    <ligand>
        <name>ATP</name>
        <dbReference type="ChEBI" id="CHEBI:30616"/>
        <label>2</label>
    </ligand>
</feature>
<feature type="binding site" evidence="1">
    <location>
        <position position="843"/>
    </location>
    <ligand>
        <name>ATP</name>
        <dbReference type="ChEBI" id="CHEBI:30616"/>
        <label>2</label>
    </ligand>
</feature>
<feature type="binding site" evidence="1">
    <location>
        <position position="844"/>
    </location>
    <ligand>
        <name>ATP</name>
        <dbReference type="ChEBI" id="CHEBI:30616"/>
        <label>2</label>
    </ligand>
</feature>
<feature type="binding site" evidence="1">
    <location>
        <position position="884"/>
    </location>
    <ligand>
        <name>ATP</name>
        <dbReference type="ChEBI" id="CHEBI:30616"/>
        <label>2</label>
    </ligand>
</feature>
<feature type="binding site" evidence="4">
    <location>
        <position position="884"/>
    </location>
    <ligand>
        <name>Mg(2+)</name>
        <dbReference type="ChEBI" id="CHEBI:18420"/>
        <label>3</label>
    </ligand>
</feature>
<feature type="binding site" evidence="4">
    <location>
        <position position="884"/>
    </location>
    <ligand>
        <name>Mn(2+)</name>
        <dbReference type="ChEBI" id="CHEBI:29035"/>
        <label>3</label>
    </ligand>
</feature>
<feature type="binding site" evidence="1">
    <location>
        <position position="902"/>
    </location>
    <ligand>
        <name>ATP</name>
        <dbReference type="ChEBI" id="CHEBI:30616"/>
        <label>2</label>
    </ligand>
</feature>
<feature type="binding site" evidence="4">
    <location>
        <position position="902"/>
    </location>
    <ligand>
        <name>Mg(2+)</name>
        <dbReference type="ChEBI" id="CHEBI:18420"/>
        <label>3</label>
    </ligand>
</feature>
<feature type="binding site" evidence="4">
    <location>
        <position position="902"/>
    </location>
    <ligand>
        <name>Mg(2+)</name>
        <dbReference type="ChEBI" id="CHEBI:18420"/>
        <label>4</label>
    </ligand>
</feature>
<feature type="binding site" evidence="4">
    <location>
        <position position="902"/>
    </location>
    <ligand>
        <name>Mn(2+)</name>
        <dbReference type="ChEBI" id="CHEBI:29035"/>
        <label>3</label>
    </ligand>
</feature>
<feature type="binding site" evidence="4">
    <location>
        <position position="902"/>
    </location>
    <ligand>
        <name>Mn(2+)</name>
        <dbReference type="ChEBI" id="CHEBI:29035"/>
        <label>4</label>
    </ligand>
</feature>
<feature type="binding site" evidence="4">
    <location>
        <position position="904"/>
    </location>
    <ligand>
        <name>Mg(2+)</name>
        <dbReference type="ChEBI" id="CHEBI:18420"/>
        <label>4</label>
    </ligand>
</feature>
<feature type="binding site" evidence="4">
    <location>
        <position position="904"/>
    </location>
    <ligand>
        <name>Mn(2+)</name>
        <dbReference type="ChEBI" id="CHEBI:29035"/>
        <label>4</label>
    </ligand>
</feature>
<gene>
    <name type="primary">argA</name>
</gene>
<organism>
    <name type="scientific">Cutaneotrichosporon cutaneum</name>
    <name type="common">Yeast</name>
    <name type="synonym">Trichosporon cutaneum</name>
    <dbReference type="NCBI Taxonomy" id="5554"/>
    <lineage>
        <taxon>Eukaryota</taxon>
        <taxon>Fungi</taxon>
        <taxon>Dikarya</taxon>
        <taxon>Basidiomycota</taxon>
        <taxon>Agaricomycotina</taxon>
        <taxon>Tremellomycetes</taxon>
        <taxon>Trichosporonales</taxon>
        <taxon>Trichosporonaceae</taxon>
        <taxon>Cutaneotrichosporon</taxon>
    </lineage>
</organism>
<protein>
    <recommendedName>
        <fullName evidence="6">Carbamoyl phosphate synthase arginine-specific large chain</fullName>
        <shortName>CPS</shortName>
        <shortName>CPSase</shortName>
        <ecNumber evidence="2">6.3.4.16</ecNumber>
        <ecNumber evidence="2">6.3.5.5</ecNumber>
    </recommendedName>
    <alternativeName>
        <fullName>Ammonium-dependent carbamoyl phosphate synthetase</fullName>
    </alternativeName>
    <alternativeName>
        <fullName>Arginine-specific carbamoyl phosphate synthetase, ammonia chain</fullName>
    </alternativeName>
    <alternativeName>
        <fullName>Glutamine-dependent carbamoyl phosphate synthetase</fullName>
    </alternativeName>
</protein>
<accession>P46056</accession>
<name>CARB_CUTCT</name>
<evidence type="ECO:0000250" key="1">
    <source>
        <dbReference type="UniProtKB" id="P00968"/>
    </source>
</evidence>
<evidence type="ECO:0000250" key="2">
    <source>
        <dbReference type="UniProtKB" id="P03965"/>
    </source>
</evidence>
<evidence type="ECO:0000255" key="3"/>
<evidence type="ECO:0000255" key="4">
    <source>
        <dbReference type="PROSITE-ProRule" id="PRU00409"/>
    </source>
</evidence>
<evidence type="ECO:0000255" key="5">
    <source>
        <dbReference type="PROSITE-ProRule" id="PRU01202"/>
    </source>
</evidence>
<evidence type="ECO:0000305" key="6"/>
<sequence length="1176" mass="128910">MLRSISIASRAAGPVRPVARARTAVGVVAPPRVCCCAPAVGNYGQVDGKATLNSLRRLPAGYRPRSCPSSRSPDVKKVLVVGSGGLSIGQAGEFDYSGSQAIKALRESNIETILINPNIATIQTSHHLASEIYFLPVTADYVAYVLEKERPDGILLTFGGQSALNVGIQLEKMGVLERLGVQVLGTPIRTLEISEDRDLFVQALNEIDIPAAQSTAVSTIQDALDAAKTIGYPIILRSAFSLGGLGSFPHDEEELRNLAAKSLSLSPQVLIEKSLKGWKEVEYEVVRDAADNTIICCNMENFDPLGTHTGDSIVVAPSQTLTDEYHMLRSAAIKIVRHVGVVGECNVQYALDPNSRDYRVIEMNARLSRSSALASKATGYPLAYTAAKIALGHTLRELPNAVTKSTTACFEPSLDYIVTKIPKWDLAKFQHVERNVGSAMKSVGEVMAIGRTFEESLQKAIRQVDPNFAGFEAYWKPEDMITALTNNNDRRLFAIAHAMLNLDYSVDYLHDLTKIDKWFLYKLENIVAVHKQLRSTPFEQLDKELVMTAKKTGFSDLQIAQLTGKTEAEVRTLRKQFGVTPFVKRIDTLAAEFPAYTNYLYTSYNATTHDVKFDNGTMVLGSGVYRIGSSVEFDWCAVTCSRAIRDLGKKTIMINYNPETVSTDFDEADRLYFEELGFERVMDIYDLEGASGVVVSVGGQLPQNIALRLKKAGVQVLGTDPEMIDSAEDRHKFSSILDSIGVDQPAWTEASSLASAKEFANRVGYPVLIRPSYVLSGAAMNVVWDEAQLEHNLTLATNVSPDHPVVISQFIDNAQEIDVDAVAHKGKLLVHAVSEHVENAGVHSGDATLVLPPFSVNQHDLGRLKTIAEKVAQAFQISGPFNMQIIRKPPTGEEDAELKVIECNLRASRSFPFVSKVLGHNFIDTASAAIMDTNVPAPIDLMAQKRDYVAIKVPQFSWTRLPGADPFLGVEMASTGEVASFGKDIYDAYWAALLSVNGMKLPKANSGILLGGDITRPEMTEVAKNLINLGFSLYTYDPKVEAHINDQPYLSIKKILVPVKDKKKLREILEEHEIQTVINMARSRAATTLDEDYAARRAAVDFGIPLINNPKLAVLFTETLEKKFVKNNPIPYSEGFKPSEVGSWRDFVGEAATTKLEGIAWTGEAYCIILIPGIGV</sequence>
<dbReference type="EC" id="6.3.4.16" evidence="2"/>
<dbReference type="EC" id="6.3.5.5" evidence="2"/>
<dbReference type="EMBL" id="L08965">
    <property type="protein sequence ID" value="AAA21443.1"/>
    <property type="molecule type" value="Genomic_DNA"/>
</dbReference>
<dbReference type="SMR" id="P46056"/>
<dbReference type="UniPathway" id="UPA00068">
    <property type="reaction ID" value="UER00171"/>
</dbReference>
<dbReference type="GO" id="GO:0005739">
    <property type="term" value="C:mitochondrion"/>
    <property type="evidence" value="ECO:0007669"/>
    <property type="project" value="UniProtKB-SubCell"/>
</dbReference>
<dbReference type="GO" id="GO:0005524">
    <property type="term" value="F:ATP binding"/>
    <property type="evidence" value="ECO:0007669"/>
    <property type="project" value="UniProtKB-KW"/>
</dbReference>
<dbReference type="GO" id="GO:0004087">
    <property type="term" value="F:carbamoyl-phosphate synthase (ammonia) activity"/>
    <property type="evidence" value="ECO:0007669"/>
    <property type="project" value="RHEA"/>
</dbReference>
<dbReference type="GO" id="GO:0004088">
    <property type="term" value="F:carbamoyl-phosphate synthase (glutamine-hydrolyzing) activity"/>
    <property type="evidence" value="ECO:0007669"/>
    <property type="project" value="UniProtKB-EC"/>
</dbReference>
<dbReference type="GO" id="GO:0046872">
    <property type="term" value="F:metal ion binding"/>
    <property type="evidence" value="ECO:0007669"/>
    <property type="project" value="UniProtKB-KW"/>
</dbReference>
<dbReference type="GO" id="GO:0006526">
    <property type="term" value="P:L-arginine biosynthetic process"/>
    <property type="evidence" value="ECO:0007669"/>
    <property type="project" value="UniProtKB-UniPathway"/>
</dbReference>
<dbReference type="CDD" id="cd01423">
    <property type="entry name" value="MGS_CPS_I_III"/>
    <property type="match status" value="1"/>
</dbReference>
<dbReference type="FunFam" id="3.30.470.20:FF:000004">
    <property type="entry name" value="Carbamoyl-phosphate synthase (glutamine-hydrolyzing)"/>
    <property type="match status" value="1"/>
</dbReference>
<dbReference type="FunFam" id="3.40.50.1380:FF:000015">
    <property type="entry name" value="Carbamoyl-phosphate synthase arginine-specific large chain"/>
    <property type="match status" value="1"/>
</dbReference>
<dbReference type="FunFam" id="1.10.1030.10:FF:000001">
    <property type="entry name" value="Carbamoyl-phosphate synthase large chain"/>
    <property type="match status" value="1"/>
</dbReference>
<dbReference type="FunFam" id="3.30.1490.20:FF:000001">
    <property type="entry name" value="Carbamoyl-phosphate synthase large chain"/>
    <property type="match status" value="1"/>
</dbReference>
<dbReference type="FunFam" id="3.30.470.20:FF:000001">
    <property type="entry name" value="Carbamoyl-phosphate synthase large chain"/>
    <property type="match status" value="1"/>
</dbReference>
<dbReference type="FunFam" id="3.40.50.20:FF:000001">
    <property type="entry name" value="Carbamoyl-phosphate synthase large chain"/>
    <property type="match status" value="1"/>
</dbReference>
<dbReference type="FunFam" id="3.40.50.20:FF:000002">
    <property type="entry name" value="Carbamoyl-phosphate synthase large chain"/>
    <property type="match status" value="1"/>
</dbReference>
<dbReference type="Gene3D" id="3.40.50.20">
    <property type="match status" value="2"/>
</dbReference>
<dbReference type="Gene3D" id="3.30.1490.20">
    <property type="entry name" value="ATP-grasp fold, A domain"/>
    <property type="match status" value="1"/>
</dbReference>
<dbReference type="Gene3D" id="3.30.470.20">
    <property type="entry name" value="ATP-grasp fold, B domain"/>
    <property type="match status" value="2"/>
</dbReference>
<dbReference type="Gene3D" id="1.10.1030.10">
    <property type="entry name" value="Carbamoyl-phosphate synthetase, large subunit oligomerisation domain"/>
    <property type="match status" value="1"/>
</dbReference>
<dbReference type="Gene3D" id="3.40.50.1380">
    <property type="entry name" value="Methylglyoxal synthase-like domain"/>
    <property type="match status" value="1"/>
</dbReference>
<dbReference type="InterPro" id="IPR011761">
    <property type="entry name" value="ATP-grasp"/>
</dbReference>
<dbReference type="InterPro" id="IPR013815">
    <property type="entry name" value="ATP_grasp_subdomain_1"/>
</dbReference>
<dbReference type="InterPro" id="IPR006275">
    <property type="entry name" value="CarbamoylP_synth_lsu"/>
</dbReference>
<dbReference type="InterPro" id="IPR005480">
    <property type="entry name" value="CarbamoylP_synth_lsu_oligo"/>
</dbReference>
<dbReference type="InterPro" id="IPR036897">
    <property type="entry name" value="CarbamoylP_synth_lsu_oligo_sf"/>
</dbReference>
<dbReference type="InterPro" id="IPR005479">
    <property type="entry name" value="CbamoylP_synth_lsu-like_ATP-bd"/>
</dbReference>
<dbReference type="InterPro" id="IPR005483">
    <property type="entry name" value="CbamoylP_synth_lsu_CPSase_dom"/>
</dbReference>
<dbReference type="InterPro" id="IPR011607">
    <property type="entry name" value="MGS-like_dom"/>
</dbReference>
<dbReference type="InterPro" id="IPR036914">
    <property type="entry name" value="MGS-like_dom_sf"/>
</dbReference>
<dbReference type="InterPro" id="IPR016185">
    <property type="entry name" value="PreATP-grasp_dom_sf"/>
</dbReference>
<dbReference type="NCBIfam" id="TIGR01369">
    <property type="entry name" value="CPSaseII_lrg"/>
    <property type="match status" value="1"/>
</dbReference>
<dbReference type="NCBIfam" id="NF003671">
    <property type="entry name" value="PRK05294.1"/>
    <property type="match status" value="1"/>
</dbReference>
<dbReference type="NCBIfam" id="NF009455">
    <property type="entry name" value="PRK12815.1"/>
    <property type="match status" value="1"/>
</dbReference>
<dbReference type="PANTHER" id="PTHR11405:SF53">
    <property type="entry name" value="CARBAMOYL-PHOSPHATE SYNTHASE [AMMONIA], MITOCHONDRIAL"/>
    <property type="match status" value="1"/>
</dbReference>
<dbReference type="PANTHER" id="PTHR11405">
    <property type="entry name" value="CARBAMOYLTRANSFERASE FAMILY MEMBER"/>
    <property type="match status" value="1"/>
</dbReference>
<dbReference type="Pfam" id="PF02786">
    <property type="entry name" value="CPSase_L_D2"/>
    <property type="match status" value="2"/>
</dbReference>
<dbReference type="Pfam" id="PF02787">
    <property type="entry name" value="CPSase_L_D3"/>
    <property type="match status" value="1"/>
</dbReference>
<dbReference type="PRINTS" id="PR00098">
    <property type="entry name" value="CPSASE"/>
</dbReference>
<dbReference type="SMART" id="SM01096">
    <property type="entry name" value="CPSase_L_D3"/>
    <property type="match status" value="1"/>
</dbReference>
<dbReference type="SUPFAM" id="SSF48108">
    <property type="entry name" value="Carbamoyl phosphate synthetase, large subunit connection domain"/>
    <property type="match status" value="1"/>
</dbReference>
<dbReference type="SUPFAM" id="SSF56059">
    <property type="entry name" value="Glutathione synthetase ATP-binding domain-like"/>
    <property type="match status" value="2"/>
</dbReference>
<dbReference type="SUPFAM" id="SSF52335">
    <property type="entry name" value="Methylglyoxal synthase-like"/>
    <property type="match status" value="1"/>
</dbReference>
<dbReference type="SUPFAM" id="SSF52440">
    <property type="entry name" value="PreATP-grasp domain"/>
    <property type="match status" value="2"/>
</dbReference>
<dbReference type="PROSITE" id="PS50975">
    <property type="entry name" value="ATP_GRASP"/>
    <property type="match status" value="2"/>
</dbReference>
<dbReference type="PROSITE" id="PS00866">
    <property type="entry name" value="CPSASE_1"/>
    <property type="match status" value="2"/>
</dbReference>
<dbReference type="PROSITE" id="PS00867">
    <property type="entry name" value="CPSASE_2"/>
    <property type="match status" value="2"/>
</dbReference>
<dbReference type="PROSITE" id="PS51855">
    <property type="entry name" value="MGS"/>
    <property type="match status" value="1"/>
</dbReference>
<comment type="function">
    <text evidence="2">Large subunit of the arginine-specific carbamoyl phosphate synthase (CPSase). CPSase catalyzes the formation of carbamoyl phosphate from the ammonia moiety of glutamine, hydrogencarbonate, and phosphate donated by ATP, constituting the first step of 2 biosynthetic pathways, one leading to arginine and/or urea and the other to pyrimidine nucleotides. The large subunit (synthetase) binds the substrates ammonia (free or transferred from glutamine from the small subunit), hydrogencarbonate and ATP and carries out an ATP-coupled ligase reaction, activating hydrogencarbonate by forming carboxy phosphate which reacts with ammonia to form carbamoyl phosphate.</text>
</comment>
<comment type="catalytic activity">
    <reaction evidence="2">
        <text>hydrogencarbonate + L-glutamine + 2 ATP + H2O = carbamoyl phosphate + L-glutamate + 2 ADP + phosphate + 2 H(+)</text>
        <dbReference type="Rhea" id="RHEA:18633"/>
        <dbReference type="ChEBI" id="CHEBI:15377"/>
        <dbReference type="ChEBI" id="CHEBI:15378"/>
        <dbReference type="ChEBI" id="CHEBI:17544"/>
        <dbReference type="ChEBI" id="CHEBI:29985"/>
        <dbReference type="ChEBI" id="CHEBI:30616"/>
        <dbReference type="ChEBI" id="CHEBI:43474"/>
        <dbReference type="ChEBI" id="CHEBI:58228"/>
        <dbReference type="ChEBI" id="CHEBI:58359"/>
        <dbReference type="ChEBI" id="CHEBI:456216"/>
        <dbReference type="EC" id="6.3.5.5"/>
    </reaction>
</comment>
<comment type="catalytic activity">
    <molecule>Carbamoyl phosphate synthase arginine-specific large chain</molecule>
    <reaction evidence="2">
        <text>hydrogencarbonate + NH4(+) + 2 ATP = carbamoyl phosphate + 2 ADP + phosphate + 2 H(+)</text>
        <dbReference type="Rhea" id="RHEA:18029"/>
        <dbReference type="ChEBI" id="CHEBI:15378"/>
        <dbReference type="ChEBI" id="CHEBI:17544"/>
        <dbReference type="ChEBI" id="CHEBI:28938"/>
        <dbReference type="ChEBI" id="CHEBI:30616"/>
        <dbReference type="ChEBI" id="CHEBI:43474"/>
        <dbReference type="ChEBI" id="CHEBI:58228"/>
        <dbReference type="ChEBI" id="CHEBI:456216"/>
        <dbReference type="EC" id="6.3.4.16"/>
    </reaction>
</comment>
<comment type="cofactor">
    <cofactor evidence="4">
        <name>Mg(2+)</name>
        <dbReference type="ChEBI" id="CHEBI:18420"/>
    </cofactor>
    <cofactor evidence="4">
        <name>Mn(2+)</name>
        <dbReference type="ChEBI" id="CHEBI:29035"/>
    </cofactor>
    <text evidence="4">Binds 4 Mg(2+) or Mn(2+) ions per subunit.</text>
</comment>
<comment type="pathway">
    <text evidence="2">Amino-acid biosynthesis; L-arginine biosynthesis; carbamoyl phosphate from bicarbonate: step 1/1.</text>
</comment>
<comment type="subunit">
    <text evidence="2">Heterodimer composed of 2 chains; the small (or glutamine) chain promotes the hydrolysis of glutamine to ammonia, which is used by the large (or ammonia) chain to synthesize carbamoyl phosphate.</text>
</comment>
<comment type="subcellular location">
    <subcellularLocation>
        <location evidence="3">Mitochondrion</location>
    </subcellularLocation>
</comment>
<comment type="domain">
    <text evidence="1">The large subunit is composed of 2 ATP-grasp domains that are involved in binding the 2 ATP molecules needed for carbamoyl phosphate synthesis. The N-terminal ATP-grasp domain (referred to as the carboxyphosphate synthetic component) catalyzes the ATP-dependent phosphorylation of hydrogencarbonate to carboxyphosphate and the subsequent nucleophilic attack by ammonia to form a carbamate intermediate. The C-terminal ATP-grasp domain (referred to as the carbamoyl phosphate synthetic component) then catalyzes the phosphorylation of carbamate with the second ATP to form the end product carbamoyl phosphate. The reactive and unstable enzyme intermediates are sequentially channeled from one active site to the next through the interior of the protein over a distance of at least 96 A.</text>
</comment>
<comment type="similarity">
    <text evidence="6">Belongs to the CarB family.</text>
</comment>
<proteinExistence type="inferred from homology"/>